<comment type="function">
    <text evidence="10">Alpha-2 adrenergic receptors mediate the catecholamine-induced inhibition of adenylate cyclase through the action of G proteins. The rank order of potency for agonists of this receptor is oxymetazoline &gt; clonidine &gt; epinephrine &gt; norepinephrine &gt; phenylephrine &gt; dopamine &gt; p-synephrine &gt; p-tyramine &gt; serotonin = p-octopamine. For antagonists, the rank order is yohimbine &gt; phentolamine = mianserine &gt; chlorpromazine = spiperone = prazosin &gt; propanolol &gt; alprenolol = pindolol.</text>
</comment>
<comment type="subcellular location">
    <subcellularLocation>
        <location evidence="10">Cell membrane</location>
        <topology evidence="10">Multi-pass membrane protein</topology>
    </subcellularLocation>
</comment>
<comment type="disease" evidence="11">
    <disease id="DI-06825">
        <name>Lipodystrophy, familial partial, 8</name>
        <acronym>FPLD8</acronym>
        <description>An autosomal dominant form of partial lipodystrophy, a disorder characterized by abnormal subcutaneous fat distribution. FPLD8 patients show selective loss of subcutaneous adipose tissue from the limbs, beginning around 13 to 15 years of age, and abnormal accumulation of subcutaneous adipose tissue in the dorsal neck and face, as well as in the posterior thoracic and abdominal regions. The disorder is associated with metabolic abnormalities, including diabetes mellitus and hyperlipidemia.</description>
        <dbReference type="MIM" id="620679"/>
    </disease>
    <text>The disease may be caused by variants affecting the gene represented in this entry.</text>
</comment>
<comment type="similarity">
    <text evidence="5">Belongs to the G-protein coupled receptor 1 family. Adrenergic receptor subfamily. ADRA2A sub-subfamily.</text>
</comment>
<comment type="caution">
    <text evidence="13">It is uncertain whether Met-1 or Met-16 is the initiator.</text>
</comment>
<comment type="sequence caution" evidence="13">
    <conflict type="erroneous initiation">
        <sequence resource="EMBL-CDS" id="AAA51664"/>
    </conflict>
    <text>Truncated N-terminus.</text>
</comment>
<comment type="sequence caution" evidence="13">
    <conflict type="frameshift">
        <sequence resource="EMBL-CDS" id="AAA51664"/>
    </conflict>
</comment>
<comment type="sequence caution" evidence="13">
    <conflict type="erroneous initiation">
        <sequence resource="EMBL-CDS" id="AAA51665"/>
    </conflict>
    <text>Truncated N-terminus.</text>
</comment>
<comment type="sequence caution" evidence="13">
    <conflict type="frameshift">
        <sequence resource="EMBL-CDS" id="AAA51665"/>
    </conflict>
</comment>
<comment type="sequence caution" evidence="13">
    <conflict type="erroneous initiation">
        <sequence resource="EMBL-CDS" id="AAG00447"/>
    </conflict>
    <text>Truncated N-terminus.</text>
</comment>
<comment type="sequence caution" evidence="13">
    <conflict type="erroneous initiation">
        <sequence resource="EMBL-CDS" id="AAH35047"/>
    </conflict>
    <text>Truncated N-terminus.</text>
</comment>
<comment type="sequence caution" evidence="13">
    <conflict type="erroneous initiation">
        <sequence resource="EMBL-CDS" id="AAH50414"/>
    </conflict>
    <text>Truncated N-terminus.</text>
</comment>
<comment type="sequence caution" evidence="13">
    <conflict type="erroneous initiation">
        <sequence resource="EMBL-CDS" id="AAK26743"/>
    </conflict>
    <text>Truncated N-terminus.</text>
</comment>
<comment type="sequence caution" evidence="13">
    <conflict type="erroneous initiation">
        <sequence resource="EMBL-CDS" id="AAK51162"/>
    </conflict>
    <text>Truncated N-terminus.</text>
</comment>
<comment type="sequence caution" evidence="13">
    <conflict type="erroneous initiation">
        <sequence resource="EMBL-CDS" id="AAZ73101"/>
    </conflict>
    <text>Truncated N-terminus.</text>
</comment>
<comment type="sequence caution" evidence="13">
    <conflict type="erroneous initiation">
        <sequence resource="EMBL-CDS" id="ABB72683"/>
    </conflict>
    <text>Truncated N-terminus.</text>
</comment>
<comment type="sequence caution" evidence="13">
    <conflict type="erroneous initiation">
        <sequence resource="EMBL-CDS" id="ABY87535"/>
    </conflict>
    <text>Truncated N-terminus.</text>
</comment>
<dbReference type="EMBL" id="M23533">
    <property type="protein sequence ID" value="AAA51665.1"/>
    <property type="status" value="ALT_SEQ"/>
    <property type="molecule type" value="Genomic_DNA"/>
</dbReference>
<dbReference type="EMBL" id="DQ149926">
    <property type="protein sequence ID" value="AAZ73101.1"/>
    <property type="status" value="ALT_INIT"/>
    <property type="molecule type" value="Genomic_DNA"/>
</dbReference>
<dbReference type="EMBL" id="AF284095">
    <property type="protein sequence ID" value="AAK26743.1"/>
    <property type="status" value="ALT_INIT"/>
    <property type="molecule type" value="mRNA"/>
</dbReference>
<dbReference type="EMBL" id="AF262016">
    <property type="protein sequence ID" value="AAG00447.2"/>
    <property type="status" value="ALT_INIT"/>
    <property type="molecule type" value="Genomic_DNA"/>
</dbReference>
<dbReference type="EMBL" id="AY032736">
    <property type="protein sequence ID" value="AAK51162.1"/>
    <property type="status" value="ALT_INIT"/>
    <property type="molecule type" value="Genomic_DNA"/>
</dbReference>
<dbReference type="EMBL" id="DQ285607">
    <property type="protein sequence ID" value="ABB72683.1"/>
    <property type="status" value="ALT_INIT"/>
    <property type="molecule type" value="Genomic_DNA"/>
</dbReference>
<dbReference type="EMBL" id="EU332846">
    <property type="protein sequence ID" value="ABY87535.1"/>
    <property type="status" value="ALT_INIT"/>
    <property type="molecule type" value="Genomic_DNA"/>
</dbReference>
<dbReference type="EMBL" id="AL158163">
    <property type="status" value="NOT_ANNOTATED_CDS"/>
    <property type="molecule type" value="Genomic_DNA"/>
</dbReference>
<dbReference type="EMBL" id="BC035047">
    <property type="protein sequence ID" value="AAH35047.1"/>
    <property type="status" value="ALT_INIT"/>
    <property type="molecule type" value="mRNA"/>
</dbReference>
<dbReference type="EMBL" id="BC050414">
    <property type="protein sequence ID" value="AAH50414.4"/>
    <property type="status" value="ALT_INIT"/>
    <property type="molecule type" value="mRNA"/>
</dbReference>
<dbReference type="EMBL" id="M18415">
    <property type="protein sequence ID" value="AAA51664.1"/>
    <property type="status" value="ALT_SEQ"/>
    <property type="molecule type" value="Genomic_DNA"/>
</dbReference>
<dbReference type="EMBL" id="AF281308">
    <property type="protein sequence ID" value="AAF91441.1"/>
    <property type="molecule type" value="Genomic_DNA"/>
</dbReference>
<dbReference type="EMBL" id="AF316894">
    <property type="protein sequence ID" value="AAK01634.1"/>
    <property type="molecule type" value="Genomic_DNA"/>
</dbReference>
<dbReference type="CCDS" id="CCDS7569.2"/>
<dbReference type="PIR" id="A34169">
    <property type="entry name" value="A34169"/>
</dbReference>
<dbReference type="RefSeq" id="NP_000672.3">
    <property type="nucleotide sequence ID" value="NM_000681.3"/>
</dbReference>
<dbReference type="PDB" id="1HLL">
    <property type="method" value="NMR"/>
    <property type="chains" value="A=133-164"/>
</dbReference>
<dbReference type="PDB" id="1HO9">
    <property type="method" value="NMR"/>
    <property type="chains" value="A=133-164"/>
</dbReference>
<dbReference type="PDB" id="1HOD">
    <property type="method" value="NMR"/>
    <property type="chains" value="A=133-164"/>
</dbReference>
<dbReference type="PDB" id="1HOF">
    <property type="method" value="NMR"/>
    <property type="chains" value="A=133-164"/>
</dbReference>
<dbReference type="PDB" id="6K42">
    <property type="method" value="EM"/>
    <property type="resolution" value="4.10 A"/>
    <property type="chains" value="R=37-44"/>
</dbReference>
<dbReference type="PDB" id="6KUX">
    <property type="method" value="X-ray"/>
    <property type="resolution" value="2.70 A"/>
    <property type="chains" value="A=35-460"/>
</dbReference>
<dbReference type="PDB" id="6KUY">
    <property type="method" value="X-ray"/>
    <property type="resolution" value="3.20 A"/>
    <property type="chains" value="A=35-460"/>
</dbReference>
<dbReference type="PDB" id="7EJ0">
    <property type="method" value="EM"/>
    <property type="resolution" value="3.20 A"/>
    <property type="chains" value="R=1-465"/>
</dbReference>
<dbReference type="PDB" id="7EJ8">
    <property type="method" value="EM"/>
    <property type="resolution" value="3.00 A"/>
    <property type="chains" value="R=1-465"/>
</dbReference>
<dbReference type="PDB" id="7EJA">
    <property type="method" value="EM"/>
    <property type="resolution" value="3.60 A"/>
    <property type="chains" value="R=1-465"/>
</dbReference>
<dbReference type="PDB" id="7EJK">
    <property type="method" value="EM"/>
    <property type="resolution" value="3.40 A"/>
    <property type="chains" value="R=1-465"/>
</dbReference>
<dbReference type="PDB" id="7W6P">
    <property type="method" value="EM"/>
    <property type="resolution" value="3.47 A"/>
    <property type="chains" value="R=1-465"/>
</dbReference>
<dbReference type="PDB" id="7W7E">
    <property type="method" value="EM"/>
    <property type="resolution" value="3.40 A"/>
    <property type="chains" value="R=1-465"/>
</dbReference>
<dbReference type="PDB" id="9CBL">
    <property type="method" value="EM"/>
    <property type="resolution" value="2.80 A"/>
    <property type="chains" value="R=35-460"/>
</dbReference>
<dbReference type="PDB" id="9CBM">
    <property type="method" value="EM"/>
    <property type="resolution" value="3.20 A"/>
    <property type="chains" value="R=35-460"/>
</dbReference>
<dbReference type="PDBsum" id="1HLL"/>
<dbReference type="PDBsum" id="1HO9"/>
<dbReference type="PDBsum" id="1HOD"/>
<dbReference type="PDBsum" id="1HOF"/>
<dbReference type="PDBsum" id="6K42"/>
<dbReference type="PDBsum" id="6KUX"/>
<dbReference type="PDBsum" id="6KUY"/>
<dbReference type="PDBsum" id="7EJ0"/>
<dbReference type="PDBsum" id="7EJ8"/>
<dbReference type="PDBsum" id="7EJA"/>
<dbReference type="PDBsum" id="7EJK"/>
<dbReference type="PDBsum" id="7W6P"/>
<dbReference type="PDBsum" id="7W7E"/>
<dbReference type="PDBsum" id="9CBL"/>
<dbReference type="PDBsum" id="9CBM"/>
<dbReference type="BMRB" id="P08913"/>
<dbReference type="EMDB" id="EMD-31147"/>
<dbReference type="EMDB" id="EMD-31156"/>
<dbReference type="EMDB" id="EMD-31157"/>
<dbReference type="EMDB" id="EMD-31162"/>
<dbReference type="EMDB" id="EMD-32331"/>
<dbReference type="EMDB" id="EMD-32342"/>
<dbReference type="EMDB" id="EMD-45425"/>
<dbReference type="EMDB" id="EMD-45426"/>
<dbReference type="SMR" id="P08913"/>
<dbReference type="BioGRID" id="106659">
    <property type="interactions" value="10"/>
</dbReference>
<dbReference type="CORUM" id="P08913"/>
<dbReference type="DIP" id="DIP-61452N"/>
<dbReference type="FunCoup" id="P08913">
    <property type="interactions" value="833"/>
</dbReference>
<dbReference type="IntAct" id="P08913">
    <property type="interactions" value="7"/>
</dbReference>
<dbReference type="STRING" id="9606.ENSP00000280155"/>
<dbReference type="BindingDB" id="P08913"/>
<dbReference type="ChEMBL" id="CHEMBL1867"/>
<dbReference type="DrugBank" id="DB03468">
    <property type="generic name" value="1,2,3,4-Tetrahydro-Isoquinoline-7-Sulfonic Acid Amide"/>
</dbReference>
<dbReference type="DrugBank" id="DB01472">
    <property type="generic name" value="4-Methoxyamphetamine"/>
</dbReference>
<dbReference type="DrugBank" id="DB08550">
    <property type="generic name" value="7,8-Dichloro-1,2,3,4-tetrahydroisoquinoline"/>
</dbReference>
<dbReference type="DrugBank" id="DB00321">
    <property type="generic name" value="Amitriptyline"/>
</dbReference>
<dbReference type="DrugBank" id="DB00543">
    <property type="generic name" value="Amoxapine"/>
</dbReference>
<dbReference type="DrugBank" id="DB00182">
    <property type="generic name" value="Amphetamine"/>
</dbReference>
<dbReference type="DrugBank" id="DB00714">
    <property type="generic name" value="Apomorphine"/>
</dbReference>
<dbReference type="DrugBank" id="DB00964">
    <property type="generic name" value="Apraclonidine"/>
</dbReference>
<dbReference type="DrugBank" id="DB09229">
    <property type="generic name" value="Aranidipine"/>
</dbReference>
<dbReference type="DrugBank" id="DB01238">
    <property type="generic name" value="Aripiprazole"/>
</dbReference>
<dbReference type="DrugBank" id="DB14185">
    <property type="generic name" value="Aripiprazole lauroxil"/>
</dbReference>
<dbReference type="DrugBank" id="DB06216">
    <property type="generic name" value="Asenapine"/>
</dbReference>
<dbReference type="DrugBank" id="DB00865">
    <property type="generic name" value="Benzphetamine"/>
</dbReference>
<dbReference type="DrugBank" id="DB00217">
    <property type="generic name" value="Bethanidine"/>
</dbReference>
<dbReference type="DrugBank" id="DB00484">
    <property type="generic name" value="Brimonidine"/>
</dbReference>
<dbReference type="DrugBank" id="DB01200">
    <property type="generic name" value="Bromocriptine"/>
</dbReference>
<dbReference type="DrugBank" id="DB00248">
    <property type="generic name" value="Cabergoline"/>
</dbReference>
<dbReference type="DrugBank" id="DB01136">
    <property type="generic name" value="Carvedilol"/>
</dbReference>
<dbReference type="DrugBank" id="DB04846">
    <property type="generic name" value="Celiprolol"/>
</dbReference>
<dbReference type="DrugBank" id="DB00477">
    <property type="generic name" value="Chlorpromazine"/>
</dbReference>
<dbReference type="DrugBank" id="DB09202">
    <property type="generic name" value="Cirazoline"/>
</dbReference>
<dbReference type="DrugBank" id="DB00575">
    <property type="generic name" value="Clonidine"/>
</dbReference>
<dbReference type="DrugBank" id="DB00363">
    <property type="generic name" value="Clozapine"/>
</dbReference>
<dbReference type="DrugBank" id="DB01151">
    <property type="generic name" value="Desipramine"/>
</dbReference>
<dbReference type="DrugBank" id="DB00633">
    <property type="generic name" value="Dexmedetomidine"/>
</dbReference>
<dbReference type="DrugBank" id="DB01576">
    <property type="generic name" value="Dextroamphetamine"/>
</dbReference>
<dbReference type="DrugBank" id="DB11273">
    <property type="generic name" value="Dihydroergocornine"/>
</dbReference>
<dbReference type="DrugBank" id="DB13345">
    <property type="generic name" value="Dihydroergocristine"/>
</dbReference>
<dbReference type="DrugBank" id="DB00320">
    <property type="generic name" value="Dihydroergotamine"/>
</dbReference>
<dbReference type="DrugBank" id="DB00449">
    <property type="generic name" value="Dipivefrin"/>
</dbReference>
<dbReference type="DrugBank" id="DB11278">
    <property type="generic name" value="DL-Methylephedrine"/>
</dbReference>
<dbReference type="DrugBank" id="DB09167">
    <property type="generic name" value="Dosulepin"/>
</dbReference>
<dbReference type="DrugBank" id="DB04855">
    <property type="generic name" value="Dronedarone"/>
</dbReference>
<dbReference type="DrugBank" id="DB06262">
    <property type="generic name" value="Droxidopa"/>
</dbReference>
<dbReference type="DrugBank" id="DB01363">
    <property type="generic name" value="Ephedra sinica root"/>
</dbReference>
<dbReference type="DrugBank" id="DB05492">
    <property type="generic name" value="Epicept NP-1"/>
</dbReference>
<dbReference type="DrugBank" id="DB00751">
    <property type="generic name" value="Epinastine"/>
</dbReference>
<dbReference type="DrugBank" id="DB00668">
    <property type="generic name" value="Epinephrine"/>
</dbReference>
<dbReference type="DrugBank" id="DB01049">
    <property type="generic name" value="Ergoloid mesylate"/>
</dbReference>
<dbReference type="DrugBank" id="DB00696">
    <property type="generic name" value="Ergotamine"/>
</dbReference>
<dbReference type="DrugBank" id="DB01175">
    <property type="generic name" value="Escitalopram"/>
</dbReference>
<dbReference type="DrugBank" id="DB06678">
    <property type="generic name" value="Esmirtazapine"/>
</dbReference>
<dbReference type="DrugBank" id="DB09194">
    <property type="generic name" value="Etoperidone"/>
</dbReference>
<dbReference type="DrugBank" id="DB00800">
    <property type="generic name" value="Fenoldopam"/>
</dbReference>
<dbReference type="DrugBank" id="DB06623">
    <property type="generic name" value="Flupirtine"/>
</dbReference>
<dbReference type="DrugBank" id="DB00629">
    <property type="generic name" value="Guanabenz"/>
</dbReference>
<dbReference type="DrugBank" id="DB01018">
    <property type="generic name" value="Guanfacine"/>
</dbReference>
<dbReference type="DrugBank" id="DB00502">
    <property type="generic name" value="Haloperidol"/>
</dbReference>
<dbReference type="DrugBank" id="DB04946">
    <property type="generic name" value="Iloperidone"/>
</dbReference>
<dbReference type="DrugBank" id="DB11577">
    <property type="generic name" value="Indigotindisulfonic acid"/>
</dbReference>
<dbReference type="DrugBank" id="DB00555">
    <property type="generic name" value="Lamotrigine"/>
</dbReference>
<dbReference type="DrugBank" id="DB06707">
    <property type="generic name" value="Levonordefrin"/>
</dbReference>
<dbReference type="DrugBank" id="DB00589">
    <property type="generic name" value="Lisuride"/>
</dbReference>
<dbReference type="DrugBank" id="DB04948">
    <property type="generic name" value="Lofexidine"/>
</dbReference>
<dbReference type="DrugBank" id="DB09195">
    <property type="generic name" value="Lorpiprazole"/>
</dbReference>
<dbReference type="DrugBank" id="DB00408">
    <property type="generic name" value="Loxapine"/>
</dbReference>
<dbReference type="DrugBank" id="DB08815">
    <property type="generic name" value="Lurasidone"/>
</dbReference>
<dbReference type="DrugBank" id="DB00934">
    <property type="generic name" value="Maprotiline"/>
</dbReference>
<dbReference type="DrugBank" id="DB11428">
    <property type="generic name" value="Medetomidine"/>
</dbReference>
<dbReference type="DrugBank" id="DB01365">
    <property type="generic name" value="Mephentermine"/>
</dbReference>
<dbReference type="DrugBank" id="DB01577">
    <property type="generic name" value="Metamfetamine"/>
</dbReference>
<dbReference type="DrugBank" id="DB01403">
    <property type="generic name" value="Methotrimeprazine"/>
</dbReference>
<dbReference type="DrugBank" id="DB00968">
    <property type="generic name" value="Methyldopa"/>
</dbReference>
<dbReference type="DrugBank" id="DB06148">
    <property type="generic name" value="Mianserin"/>
</dbReference>
<dbReference type="DrugBank" id="DB00370">
    <property type="generic name" value="Mirtazapine"/>
</dbReference>
<dbReference type="DrugBank" id="DB09205">
    <property type="generic name" value="Moxisylyte"/>
</dbReference>
<dbReference type="DrugBank" id="DB09242">
    <property type="generic name" value="Moxonidine"/>
</dbReference>
<dbReference type="DrugBank" id="DB06711">
    <property type="generic name" value="Naphazoline"/>
</dbReference>
<dbReference type="DrugBank" id="DB01149">
    <property type="generic name" value="Nefazodone"/>
</dbReference>
<dbReference type="DrugBank" id="DB00368">
    <property type="generic name" value="Norepinephrine"/>
</dbReference>
<dbReference type="DrugBank" id="DB00540">
    <property type="generic name" value="Nortriptyline"/>
</dbReference>
<dbReference type="DrugBank" id="DB06229">
    <property type="generic name" value="Ocaperidone"/>
</dbReference>
<dbReference type="DrugBank" id="DB00935">
    <property type="generic name" value="Oxymetazoline"/>
</dbReference>
<dbReference type="DrugBank" id="DB01267">
    <property type="generic name" value="Paliperidone"/>
</dbReference>
<dbReference type="DrugBank" id="DB00715">
    <property type="generic name" value="Paroxetine"/>
</dbReference>
<dbReference type="DrugBank" id="DB01186">
    <property type="generic name" value="Pergolide"/>
</dbReference>
<dbReference type="DrugBank" id="DB01608">
    <property type="generic name" value="Periciazine"/>
</dbReference>
<dbReference type="DrugBank" id="DB00925">
    <property type="generic name" value="Phenoxybenzamine"/>
</dbReference>
<dbReference type="DrugBank" id="DB00692">
    <property type="generic name" value="Phentolamine"/>
</dbReference>
<dbReference type="DrugBank" id="DB00397">
    <property type="generic name" value="Phenylpropanolamine"/>
</dbReference>
<dbReference type="DrugBank" id="DB09286">
    <property type="generic name" value="Pipamperone"/>
</dbReference>
<dbReference type="DrugBank" id="DB09244">
    <property type="generic name" value="Pirlindole"/>
</dbReference>
<dbReference type="DrugBank" id="DB06153">
    <property type="generic name" value="Pizotifen"/>
</dbReference>
<dbReference type="DrugBank" id="DB00413">
    <property type="generic name" value="Pramipexole"/>
</dbReference>
<dbReference type="DrugBank" id="DB00457">
    <property type="generic name" value="Prazosin"/>
</dbReference>
<dbReference type="DrugBank" id="DB00433">
    <property type="generic name" value="Prochlorperazine"/>
</dbReference>
<dbReference type="DrugBank" id="DB01069">
    <property type="generic name" value="Promethazine"/>
</dbReference>
<dbReference type="DrugBank" id="DB00852">
    <property type="generic name" value="Pseudoephedrine"/>
</dbReference>
<dbReference type="DrugBank" id="DB01224">
    <property type="generic name" value="Quetiapine"/>
</dbReference>
<dbReference type="DrugBank" id="DB11124">
    <property type="generic name" value="Racepinephrine"/>
</dbReference>
<dbReference type="DrugBank" id="DB11738">
    <property type="generic name" value="Rilmenidine"/>
</dbReference>
<dbReference type="DrugBank" id="DB00268">
    <property type="generic name" value="Ropinirole"/>
</dbReference>
<dbReference type="DrugBank" id="DB09304">
    <property type="generic name" value="Setiptiline"/>
</dbReference>
<dbReference type="DrugBank" id="DB06764">
    <property type="generic name" value="Tetryzoline"/>
</dbReference>
<dbReference type="DrugBank" id="DB13025">
    <property type="generic name" value="Tiapride"/>
</dbReference>
<dbReference type="DrugBank" id="DB00697">
    <property type="generic name" value="Tizanidine"/>
</dbReference>
<dbReference type="DrugBank" id="DB00797">
    <property type="generic name" value="Tolazoline"/>
</dbReference>
<dbReference type="DrugBank" id="DB00193">
    <property type="generic name" value="Tramadol"/>
</dbReference>
<dbReference type="DrugBank" id="DB13064">
    <property type="generic name" value="Tramazoline"/>
</dbReference>
<dbReference type="DrugBank" id="DB00656">
    <property type="generic name" value="Trazodone"/>
</dbReference>
<dbReference type="DrugBank" id="DB00726">
    <property type="generic name" value="Trimipramine"/>
</dbReference>
<dbReference type="DrugBank" id="DB11477">
    <property type="generic name" value="Xylazine"/>
</dbReference>
<dbReference type="DrugBank" id="DB06694">
    <property type="generic name" value="Xylometazoline"/>
</dbReference>
<dbReference type="DrugBank" id="DB01392">
    <property type="generic name" value="Yohimbine"/>
</dbReference>
<dbReference type="DrugBank" id="DB00246">
    <property type="generic name" value="Ziprasidone"/>
</dbReference>
<dbReference type="DrugBank" id="DB01624">
    <property type="generic name" value="Zuclopenthixol"/>
</dbReference>
<dbReference type="DrugCentral" id="P08913"/>
<dbReference type="GuidetoPHARMACOLOGY" id="25"/>
<dbReference type="TCDB" id="9.A.14.3.16">
    <property type="family name" value="the g-protein-coupled receptor (gpcr) family"/>
</dbReference>
<dbReference type="GlyCosmos" id="P08913">
    <property type="glycosylation" value="2 sites, No reported glycans"/>
</dbReference>
<dbReference type="GlyGen" id="P08913">
    <property type="glycosylation" value="3 sites, 1 O-linked glycan (1 site)"/>
</dbReference>
<dbReference type="iPTMnet" id="P08913"/>
<dbReference type="PhosphoSitePlus" id="P08913"/>
<dbReference type="SwissPalm" id="P08913"/>
<dbReference type="BioMuta" id="ADRA2A"/>
<dbReference type="DMDM" id="1351829"/>
<dbReference type="jPOST" id="P08913"/>
<dbReference type="MassIVE" id="P08913"/>
<dbReference type="PaxDb" id="9606-ENSP00000280155"/>
<dbReference type="PeptideAtlas" id="P08913"/>
<dbReference type="ProteomicsDB" id="52176"/>
<dbReference type="Antibodypedia" id="31769">
    <property type="antibodies" value="336 antibodies from 37 providers"/>
</dbReference>
<dbReference type="DNASU" id="150"/>
<dbReference type="Ensembl" id="ENST00000280155.4">
    <property type="protein sequence ID" value="ENSP00000280155.2"/>
    <property type="gene ID" value="ENSG00000150594.7"/>
</dbReference>
<dbReference type="GeneID" id="150"/>
<dbReference type="KEGG" id="hsa:150"/>
<dbReference type="MANE-Select" id="ENST00000280155.4">
    <property type="protein sequence ID" value="ENSP00000280155.2"/>
    <property type="RefSeq nucleotide sequence ID" value="NM_000681.4"/>
    <property type="RefSeq protein sequence ID" value="NP_000672.3"/>
</dbReference>
<dbReference type="UCSC" id="uc001kzo.4">
    <property type="organism name" value="human"/>
</dbReference>
<dbReference type="AGR" id="HGNC:281"/>
<dbReference type="CTD" id="150"/>
<dbReference type="DisGeNET" id="150"/>
<dbReference type="GeneCards" id="ADRA2A"/>
<dbReference type="HGNC" id="HGNC:281">
    <property type="gene designation" value="ADRA2A"/>
</dbReference>
<dbReference type="HPA" id="ENSG00000150594">
    <property type="expression patterns" value="Tissue enhanced (adipose tissue, cervix)"/>
</dbReference>
<dbReference type="MalaCards" id="ADRA2A"/>
<dbReference type="MIM" id="104210">
    <property type="type" value="gene"/>
</dbReference>
<dbReference type="MIM" id="620679">
    <property type="type" value="phenotype"/>
</dbReference>
<dbReference type="neXtProt" id="NX_P08913"/>
<dbReference type="OpenTargets" id="ENSG00000150594"/>
<dbReference type="PharmGKB" id="PA35"/>
<dbReference type="VEuPathDB" id="HostDB:ENSG00000150594"/>
<dbReference type="eggNOG" id="KOG3656">
    <property type="taxonomic scope" value="Eukaryota"/>
</dbReference>
<dbReference type="GeneTree" id="ENSGT00940000161451"/>
<dbReference type="HOGENOM" id="CLU_009579_11_1_1"/>
<dbReference type="InParanoid" id="P08913"/>
<dbReference type="OMA" id="FFTYMLM"/>
<dbReference type="OrthoDB" id="5975661at2759"/>
<dbReference type="PAN-GO" id="P08913">
    <property type="GO annotations" value="4 GO annotations based on evolutionary models"/>
</dbReference>
<dbReference type="PhylomeDB" id="P08913"/>
<dbReference type="TreeFam" id="TF316350"/>
<dbReference type="PathwayCommons" id="P08913"/>
<dbReference type="Reactome" id="R-HSA-390696">
    <property type="pathway name" value="Adrenoceptors"/>
</dbReference>
<dbReference type="Reactome" id="R-HSA-392023">
    <property type="pathway name" value="Adrenaline signalling through Alpha-2 adrenergic receptor"/>
</dbReference>
<dbReference type="Reactome" id="R-HSA-400042">
    <property type="pathway name" value="Adrenaline,noradrenaline inhibits insulin secretion"/>
</dbReference>
<dbReference type="Reactome" id="R-HSA-418594">
    <property type="pathway name" value="G alpha (i) signalling events"/>
</dbReference>
<dbReference type="Reactome" id="R-HSA-418597">
    <property type="pathway name" value="G alpha (z) signalling events"/>
</dbReference>
<dbReference type="Reactome" id="R-HSA-5683826">
    <property type="pathway name" value="Surfactant metabolism"/>
</dbReference>
<dbReference type="SignaLink" id="P08913"/>
<dbReference type="SIGNOR" id="P08913"/>
<dbReference type="BioGRID-ORCS" id="150">
    <property type="hits" value="9 hits in 1148 CRISPR screens"/>
</dbReference>
<dbReference type="ChiTaRS" id="ADRA2A">
    <property type="organism name" value="human"/>
</dbReference>
<dbReference type="EvolutionaryTrace" id="P08913"/>
<dbReference type="GeneWiki" id="Alpha-2A_adrenergic_receptor"/>
<dbReference type="GenomeRNAi" id="150"/>
<dbReference type="Pharos" id="P08913">
    <property type="development level" value="Tclin"/>
</dbReference>
<dbReference type="PRO" id="PR:P08913"/>
<dbReference type="Proteomes" id="UP000005640">
    <property type="component" value="Chromosome 10"/>
</dbReference>
<dbReference type="RNAct" id="P08913">
    <property type="molecule type" value="protein"/>
</dbReference>
<dbReference type="Bgee" id="ENSG00000150594">
    <property type="expression patterns" value="Expressed in cortical plate and 158 other cell types or tissues"/>
</dbReference>
<dbReference type="GO" id="GO:0043679">
    <property type="term" value="C:axon terminus"/>
    <property type="evidence" value="ECO:0007669"/>
    <property type="project" value="Ensembl"/>
</dbReference>
<dbReference type="GO" id="GO:0016323">
    <property type="term" value="C:basolateral plasma membrane"/>
    <property type="evidence" value="ECO:0000304"/>
    <property type="project" value="BHF-UCL"/>
</dbReference>
<dbReference type="GO" id="GO:0005737">
    <property type="term" value="C:cytoplasm"/>
    <property type="evidence" value="ECO:0000314"/>
    <property type="project" value="BHF-UCL"/>
</dbReference>
<dbReference type="GO" id="GO:0098691">
    <property type="term" value="C:dopaminergic synapse"/>
    <property type="evidence" value="ECO:0007669"/>
    <property type="project" value="Ensembl"/>
</dbReference>
<dbReference type="GO" id="GO:0098982">
    <property type="term" value="C:GABA-ergic synapse"/>
    <property type="evidence" value="ECO:0007669"/>
    <property type="project" value="Ensembl"/>
</dbReference>
<dbReference type="GO" id="GO:0098978">
    <property type="term" value="C:glutamatergic synapse"/>
    <property type="evidence" value="ECO:0007669"/>
    <property type="project" value="Ensembl"/>
</dbReference>
<dbReference type="GO" id="GO:0043025">
    <property type="term" value="C:neuronal cell body"/>
    <property type="evidence" value="ECO:0007669"/>
    <property type="project" value="Ensembl"/>
</dbReference>
<dbReference type="GO" id="GO:0005886">
    <property type="term" value="C:plasma membrane"/>
    <property type="evidence" value="ECO:0000314"/>
    <property type="project" value="BHF-UCL"/>
</dbReference>
<dbReference type="GO" id="GO:0098839">
    <property type="term" value="C:postsynaptic density membrane"/>
    <property type="evidence" value="ECO:0007669"/>
    <property type="project" value="Ensembl"/>
</dbReference>
<dbReference type="GO" id="GO:0048787">
    <property type="term" value="C:presynaptic active zone membrane"/>
    <property type="evidence" value="ECO:0007669"/>
    <property type="project" value="Ensembl"/>
</dbReference>
<dbReference type="GO" id="GO:0043235">
    <property type="term" value="C:receptor complex"/>
    <property type="evidence" value="ECO:0000314"/>
    <property type="project" value="BHF-UCL"/>
</dbReference>
<dbReference type="GO" id="GO:0031692">
    <property type="term" value="F:alpha-1B adrenergic receptor binding"/>
    <property type="evidence" value="ECO:0000250"/>
    <property type="project" value="BHF-UCL"/>
</dbReference>
<dbReference type="GO" id="GO:0031696">
    <property type="term" value="F:alpha-2C adrenergic receptor binding"/>
    <property type="evidence" value="ECO:0000353"/>
    <property type="project" value="BHF-UCL"/>
</dbReference>
<dbReference type="GO" id="GO:0004938">
    <property type="term" value="F:alpha2-adrenergic receptor activity"/>
    <property type="evidence" value="ECO:0000314"/>
    <property type="project" value="BHF-UCL"/>
</dbReference>
<dbReference type="GO" id="GO:0051379">
    <property type="term" value="F:epinephrine binding"/>
    <property type="evidence" value="ECO:0000314"/>
    <property type="project" value="BHF-UCL"/>
</dbReference>
<dbReference type="GO" id="GO:0005085">
    <property type="term" value="F:guanyl-nucleotide exchange factor activity"/>
    <property type="evidence" value="ECO:0000304"/>
    <property type="project" value="Reactome"/>
</dbReference>
<dbReference type="GO" id="GO:0032795">
    <property type="term" value="F:heterotrimeric G-protein binding"/>
    <property type="evidence" value="ECO:0000314"/>
    <property type="project" value="BHF-UCL"/>
</dbReference>
<dbReference type="GO" id="GO:0051380">
    <property type="term" value="F:norepinephrine binding"/>
    <property type="evidence" value="ECO:0000314"/>
    <property type="project" value="BHF-UCL"/>
</dbReference>
<dbReference type="GO" id="GO:0046982">
    <property type="term" value="F:protein heterodimerization activity"/>
    <property type="evidence" value="ECO:0000353"/>
    <property type="project" value="BHF-UCL"/>
</dbReference>
<dbReference type="GO" id="GO:0042803">
    <property type="term" value="F:protein homodimerization activity"/>
    <property type="evidence" value="ECO:0000314"/>
    <property type="project" value="BHF-UCL"/>
</dbReference>
<dbReference type="GO" id="GO:0019901">
    <property type="term" value="F:protein kinase binding"/>
    <property type="evidence" value="ECO:0000353"/>
    <property type="project" value="BHF-UCL"/>
</dbReference>
<dbReference type="GO" id="GO:0031996">
    <property type="term" value="F:thioesterase binding"/>
    <property type="evidence" value="ECO:0000353"/>
    <property type="project" value="BHF-UCL"/>
</dbReference>
<dbReference type="GO" id="GO:0030036">
    <property type="term" value="P:actin cytoskeleton organization"/>
    <property type="evidence" value="ECO:0000304"/>
    <property type="project" value="ProtInc"/>
</dbReference>
<dbReference type="GO" id="GO:0071880">
    <property type="term" value="P:adenylate cyclase-activating adrenergic receptor signaling pathway"/>
    <property type="evidence" value="ECO:0000314"/>
    <property type="project" value="BHF-UCL"/>
</dbReference>
<dbReference type="GO" id="GO:0007189">
    <property type="term" value="P:adenylate cyclase-activating G protein-coupled receptor signaling pathway"/>
    <property type="evidence" value="ECO:0000250"/>
    <property type="project" value="BHF-UCL"/>
</dbReference>
<dbReference type="GO" id="GO:0071881">
    <property type="term" value="P:adenylate cyclase-inhibiting adrenergic receptor signaling pathway"/>
    <property type="evidence" value="ECO:0000314"/>
    <property type="project" value="BHF-UCL"/>
</dbReference>
<dbReference type="GO" id="GO:0007193">
    <property type="term" value="P:adenylate cyclase-inhibiting G protein-coupled receptor signaling pathway"/>
    <property type="evidence" value="ECO:0000250"/>
    <property type="project" value="BHF-UCL"/>
</dbReference>
<dbReference type="GO" id="GO:0071875">
    <property type="term" value="P:adrenergic receptor signaling pathway"/>
    <property type="evidence" value="ECO:0000314"/>
    <property type="project" value="BHF-UCL"/>
</dbReference>
<dbReference type="GO" id="GO:0032870">
    <property type="term" value="P:cellular response to hormone stimulus"/>
    <property type="evidence" value="ECO:0000316"/>
    <property type="project" value="BHF-UCL"/>
</dbReference>
<dbReference type="GO" id="GO:0006260">
    <property type="term" value="P:DNA replication"/>
    <property type="evidence" value="ECO:0007669"/>
    <property type="project" value="Ensembl"/>
</dbReference>
<dbReference type="GO" id="GO:0042596">
    <property type="term" value="P:fear response"/>
    <property type="evidence" value="ECO:0007669"/>
    <property type="project" value="Ensembl"/>
</dbReference>
<dbReference type="GO" id="GO:0007565">
    <property type="term" value="P:female pregnancy"/>
    <property type="evidence" value="ECO:0007669"/>
    <property type="project" value="Ensembl"/>
</dbReference>
<dbReference type="GO" id="GO:0007186">
    <property type="term" value="P:G protein-coupled receptor signaling pathway"/>
    <property type="evidence" value="ECO:0000314"/>
    <property type="project" value="BHF-UCL"/>
</dbReference>
<dbReference type="GO" id="GO:0042593">
    <property type="term" value="P:glucose homeostasis"/>
    <property type="evidence" value="ECO:0000315"/>
    <property type="project" value="BHF-UCL"/>
</dbReference>
<dbReference type="GO" id="GO:0050892">
    <property type="term" value="P:intestinal absorption"/>
    <property type="evidence" value="ECO:0000304"/>
    <property type="project" value="BHF-UCL"/>
</dbReference>
<dbReference type="GO" id="GO:0051926">
    <property type="term" value="P:negative regulation of calcium ion transport"/>
    <property type="evidence" value="ECO:0000250"/>
    <property type="project" value="BHF-UCL"/>
</dbReference>
<dbReference type="GO" id="GO:0045955">
    <property type="term" value="P:negative regulation of calcium ion-dependent exocytosis"/>
    <property type="evidence" value="ECO:0000305"/>
    <property type="project" value="BHF-UCL"/>
</dbReference>
<dbReference type="GO" id="GO:0032811">
    <property type="term" value="P:negative regulation of epinephrine secretion"/>
    <property type="evidence" value="ECO:0000303"/>
    <property type="project" value="BHF-UCL"/>
</dbReference>
<dbReference type="GO" id="GO:0046676">
    <property type="term" value="P:negative regulation of insulin secretion"/>
    <property type="evidence" value="ECO:0000315"/>
    <property type="project" value="BHF-UCL"/>
</dbReference>
<dbReference type="GO" id="GO:0061179">
    <property type="term" value="P:negative regulation of insulin secretion involved in cellular response to glucose stimulus"/>
    <property type="evidence" value="ECO:0000315"/>
    <property type="project" value="BHF-UCL"/>
</dbReference>
<dbReference type="GO" id="GO:0050995">
    <property type="term" value="P:negative regulation of lipid catabolic process"/>
    <property type="evidence" value="ECO:0000316"/>
    <property type="project" value="BHF-UCL"/>
</dbReference>
<dbReference type="GO" id="GO:0010700">
    <property type="term" value="P:negative regulation of norepinephrine secretion"/>
    <property type="evidence" value="ECO:0000304"/>
    <property type="project" value="BHF-UCL"/>
</dbReference>
<dbReference type="GO" id="GO:0070473">
    <property type="term" value="P:negative regulation of uterine smooth muscle contraction"/>
    <property type="evidence" value="ECO:0007669"/>
    <property type="project" value="Ensembl"/>
</dbReference>
<dbReference type="GO" id="GO:0071882">
    <property type="term" value="P:phospholipase C-activating adrenergic receptor signaling pathway"/>
    <property type="evidence" value="ECO:0000314"/>
    <property type="project" value="BHF-UCL"/>
</dbReference>
<dbReference type="GO" id="GO:0030168">
    <property type="term" value="P:platelet activation"/>
    <property type="evidence" value="ECO:0007669"/>
    <property type="project" value="InterPro"/>
</dbReference>
<dbReference type="GO" id="GO:0030335">
    <property type="term" value="P:positive regulation of cell migration"/>
    <property type="evidence" value="ECO:0000315"/>
    <property type="project" value="BHF-UCL"/>
</dbReference>
<dbReference type="GO" id="GO:0008284">
    <property type="term" value="P:positive regulation of cell population proliferation"/>
    <property type="evidence" value="ECO:0000304"/>
    <property type="project" value="ProtInc"/>
</dbReference>
<dbReference type="GO" id="GO:0001819">
    <property type="term" value="P:positive regulation of cytokine production"/>
    <property type="evidence" value="ECO:0000314"/>
    <property type="project" value="BHF-UCL"/>
</dbReference>
<dbReference type="GO" id="GO:0045742">
    <property type="term" value="P:positive regulation of epidermal growth factor receptor signaling pathway"/>
    <property type="evidence" value="ECO:0000314"/>
    <property type="project" value="BHF-UCL"/>
</dbReference>
<dbReference type="GO" id="GO:0043410">
    <property type="term" value="P:positive regulation of MAPK cascade"/>
    <property type="evidence" value="ECO:0000314"/>
    <property type="project" value="BHF-UCL"/>
</dbReference>
<dbReference type="GO" id="GO:0051044">
    <property type="term" value="P:positive regulation of membrane protein ectodomain proteolysis"/>
    <property type="evidence" value="ECO:0000314"/>
    <property type="project" value="BHF-UCL"/>
</dbReference>
<dbReference type="GO" id="GO:0051897">
    <property type="term" value="P:positive regulation of phosphatidylinositol 3-kinase/protein kinase B signal transduction"/>
    <property type="evidence" value="ECO:0000314"/>
    <property type="project" value="BHF-UCL"/>
</dbReference>
<dbReference type="GO" id="GO:0043268">
    <property type="term" value="P:positive regulation of potassium ion transport"/>
    <property type="evidence" value="ECO:0000250"/>
    <property type="project" value="BHF-UCL"/>
</dbReference>
<dbReference type="GO" id="GO:0090303">
    <property type="term" value="P:positive regulation of wound healing"/>
    <property type="evidence" value="ECO:0000315"/>
    <property type="project" value="BHF-UCL"/>
</dbReference>
<dbReference type="GO" id="GO:0099171">
    <property type="term" value="P:presynaptic modulation of chemical synaptic transmission"/>
    <property type="evidence" value="ECO:0007669"/>
    <property type="project" value="Ensembl"/>
</dbReference>
<dbReference type="GO" id="GO:0007265">
    <property type="term" value="P:Ras protein signal transduction"/>
    <property type="evidence" value="ECO:0000304"/>
    <property type="project" value="ProtInc"/>
</dbReference>
<dbReference type="GO" id="GO:0019229">
    <property type="term" value="P:regulation of vasoconstriction"/>
    <property type="evidence" value="ECO:0007669"/>
    <property type="project" value="InterPro"/>
</dbReference>
<dbReference type="GO" id="GO:0097305">
    <property type="term" value="P:response to alcohol"/>
    <property type="evidence" value="ECO:0007669"/>
    <property type="project" value="Ensembl"/>
</dbReference>
<dbReference type="GO" id="GO:0043278">
    <property type="term" value="P:response to morphine"/>
    <property type="evidence" value="ECO:0007669"/>
    <property type="project" value="Ensembl"/>
</dbReference>
<dbReference type="GO" id="GO:0007266">
    <property type="term" value="P:Rho protein signal transduction"/>
    <property type="evidence" value="ECO:0000304"/>
    <property type="project" value="ProtInc"/>
</dbReference>
<dbReference type="GO" id="GO:0050955">
    <property type="term" value="P:thermoception"/>
    <property type="evidence" value="ECO:0007669"/>
    <property type="project" value="Ensembl"/>
</dbReference>
<dbReference type="GO" id="GO:0042311">
    <property type="term" value="P:vasodilation"/>
    <property type="evidence" value="ECO:0007669"/>
    <property type="project" value="Ensembl"/>
</dbReference>
<dbReference type="CDD" id="cd15322">
    <property type="entry name" value="7tmA_alpha2A_AR"/>
    <property type="match status" value="1"/>
</dbReference>
<dbReference type="Gene3D" id="1.20.1070.10">
    <property type="entry name" value="Rhodopsin 7-helix transmembrane proteins"/>
    <property type="match status" value="1"/>
</dbReference>
<dbReference type="InterPro" id="IPR002233">
    <property type="entry name" value="ADR_fam"/>
</dbReference>
<dbReference type="InterPro" id="IPR001946">
    <property type="entry name" value="ADRA2A_rcpt"/>
</dbReference>
<dbReference type="InterPro" id="IPR000276">
    <property type="entry name" value="GPCR_Rhodpsn"/>
</dbReference>
<dbReference type="InterPro" id="IPR017452">
    <property type="entry name" value="GPCR_Rhodpsn_7TM"/>
</dbReference>
<dbReference type="PANTHER" id="PTHR24248">
    <property type="entry name" value="ADRENERGIC RECEPTOR-RELATED G-PROTEIN COUPLED RECEPTOR"/>
    <property type="match status" value="1"/>
</dbReference>
<dbReference type="PANTHER" id="PTHR24248:SF24">
    <property type="entry name" value="ALPHA-2A ADRENERGIC RECEPTOR"/>
    <property type="match status" value="1"/>
</dbReference>
<dbReference type="Pfam" id="PF00001">
    <property type="entry name" value="7tm_1"/>
    <property type="match status" value="1"/>
</dbReference>
<dbReference type="PRINTS" id="PR01103">
    <property type="entry name" value="ADRENERGICR"/>
</dbReference>
<dbReference type="PRINTS" id="PR00558">
    <property type="entry name" value="ADRENRGCA2AR"/>
</dbReference>
<dbReference type="PRINTS" id="PR00237">
    <property type="entry name" value="GPCRRHODOPSN"/>
</dbReference>
<dbReference type="SMART" id="SM01381">
    <property type="entry name" value="7TM_GPCR_Srsx"/>
    <property type="match status" value="1"/>
</dbReference>
<dbReference type="SUPFAM" id="SSF81321">
    <property type="entry name" value="Family A G protein-coupled receptor-like"/>
    <property type="match status" value="1"/>
</dbReference>
<dbReference type="PROSITE" id="PS00237">
    <property type="entry name" value="G_PROTEIN_RECEP_F1_1"/>
    <property type="match status" value="1"/>
</dbReference>
<dbReference type="PROSITE" id="PS50262">
    <property type="entry name" value="G_PROTEIN_RECEP_F1_2"/>
    <property type="match status" value="1"/>
</dbReference>
<feature type="chain" id="PRO_0000069080" description="Alpha-2A adrenergic receptor">
    <location>
        <begin position="1"/>
        <end position="465"/>
    </location>
</feature>
<feature type="topological domain" description="Extracellular" evidence="1">
    <location>
        <begin position="1"/>
        <end position="48"/>
    </location>
</feature>
<feature type="transmembrane region" description="Helical; Name=1" evidence="1">
    <location>
        <begin position="49"/>
        <end position="74"/>
    </location>
</feature>
<feature type="topological domain" description="Cytoplasmic" evidence="1">
    <location>
        <begin position="75"/>
        <end position="85"/>
    </location>
</feature>
<feature type="transmembrane region" description="Helical; Name=2" evidence="1">
    <location>
        <begin position="86"/>
        <end position="111"/>
    </location>
</feature>
<feature type="topological domain" description="Extracellular" evidence="1">
    <location>
        <begin position="112"/>
        <end position="121"/>
    </location>
</feature>
<feature type="transmembrane region" description="Helical; Name=3" evidence="1">
    <location>
        <begin position="122"/>
        <end position="144"/>
    </location>
</feature>
<feature type="topological domain" description="Cytoplasmic" evidence="1">
    <location>
        <begin position="145"/>
        <end position="166"/>
    </location>
</feature>
<feature type="transmembrane region" description="Helical; Name=4" evidence="1">
    <location>
        <begin position="167"/>
        <end position="187"/>
    </location>
</feature>
<feature type="topological domain" description="Extracellular" evidence="1">
    <location>
        <begin position="188"/>
        <end position="209"/>
    </location>
</feature>
<feature type="transmembrane region" description="Helical; Name=5" evidence="1">
    <location>
        <begin position="210"/>
        <end position="232"/>
    </location>
</feature>
<feature type="topological domain" description="Cytoplasmic" evidence="1">
    <location>
        <begin position="233"/>
        <end position="389"/>
    </location>
</feature>
<feature type="transmembrane region" description="Helical; Name=6" evidence="1">
    <location>
        <begin position="390"/>
        <end position="410"/>
    </location>
</feature>
<feature type="topological domain" description="Extracellular" evidence="1">
    <location>
        <begin position="411"/>
        <end position="424"/>
    </location>
</feature>
<feature type="transmembrane region" description="Helical; Name=7" evidence="1">
    <location>
        <begin position="425"/>
        <end position="444"/>
    </location>
</feature>
<feature type="topological domain" description="Cytoplasmic" evidence="1">
    <location>
        <begin position="445"/>
        <end position="465"/>
    </location>
</feature>
<feature type="region of interest" description="Disordered" evidence="6">
    <location>
        <begin position="242"/>
        <end position="368"/>
    </location>
</feature>
<feature type="compositionally biased region" description="Basic and acidic residues" evidence="6">
    <location>
        <begin position="313"/>
        <end position="330"/>
    </location>
</feature>
<feature type="site" description="Implicated in ligand binding">
    <location>
        <position position="128"/>
    </location>
</feature>
<feature type="site" description="Implicated in catechol agonist binding and receptor activation">
    <location>
        <position position="215"/>
    </location>
</feature>
<feature type="site" description="Implicated in catechol agonist binding and receptor activation">
    <location>
        <position position="219"/>
    </location>
</feature>
<feature type="modified residue" description="Phosphoserine" evidence="2">
    <location>
        <position position="346"/>
    </location>
</feature>
<feature type="modified residue" description="Omega-N-methylarginine" evidence="3">
    <location>
        <position position="368"/>
    </location>
</feature>
<feature type="lipid moiety-binding region" description="S-palmitoyl cysteine" evidence="1">
    <location>
        <position position="457"/>
    </location>
</feature>
<feature type="glycosylation site" description="N-linked (GlcNAc...) asparagine" evidence="4">
    <location>
        <position position="25"/>
    </location>
</feature>
<feature type="glycosylation site" description="N-linked (GlcNAc...) asparagine" evidence="4">
    <location>
        <position position="29"/>
    </location>
</feature>
<feature type="disulfide bond" evidence="5">
    <location>
        <begin position="121"/>
        <end position="203"/>
    </location>
</feature>
<feature type="sequence variant" id="VAR_089227" description="In FPLD8; uncertain significance; decreased function in adenylate cyclase-inhibiting adrenergic receptor signaling pathway; dbSNP:rs1224440739." evidence="11">
    <original>L</original>
    <variation>F</variation>
    <location>
        <position position="68"/>
    </location>
</feature>
<feature type="sequence variant" id="VAR_014957" description="40% increase in agonist-promoted Gi coupling; dbSNP:rs1800035." evidence="7 12">
    <original>N</original>
    <variation>K</variation>
    <location>
        <position position="266"/>
    </location>
</feature>
<feature type="sequence variant" id="VAR_055908" description="In dbSNP:rs35658213.">
    <original>C</original>
    <variation>S</variation>
    <location>
        <position position="416"/>
    </location>
</feature>
<feature type="mutagenesis site" description="No change in binding affinity. Eliminates guanine nucleotide-sensitive agonist binding." evidence="9">
    <original>D</original>
    <variation>N</variation>
    <location>
        <position position="94"/>
    </location>
</feature>
<feature type="mutagenesis site" description="No binding to yohimbine. Increase in adenylate cyclase activity." evidence="9">
    <original>D</original>
    <variation>N</variation>
    <location>
        <position position="128"/>
    </location>
</feature>
<feature type="mutagenesis site" description="Lower affinity for agonists. Eliminates guanine nucleotide-sensitive agonist binding." evidence="9">
    <original>D</original>
    <variation>N</variation>
    <location>
        <position position="145"/>
    </location>
</feature>
<feature type="mutagenesis site" description="Lower affinity for agonists. No change in guanine nucleotide-sensitive agonist binding." evidence="9">
    <original>S</original>
    <variation>A</variation>
    <location>
        <position position="215"/>
    </location>
</feature>
<feature type="mutagenesis site" description="Lower affinity for agonists. Reduced guanine nucleotide-sensitive agonist binding." evidence="9">
    <original>S</original>
    <variation>A</variation>
    <location>
        <position position="219"/>
    </location>
</feature>
<feature type="mutagenesis site" description="350-fold reduced affinity for alpha-2 antagonist yohimbine, 3000-fold increase for beta-antagonist alprenolol." evidence="8">
    <original>F</original>
    <variation>N</variation>
    <location>
        <position position="427"/>
    </location>
</feature>
<feature type="sequence conflict" description="In Ref. 11; AAA51664." evidence="13" ref="11">
    <original>A</original>
    <variation>T</variation>
    <location>
        <position position="119"/>
    </location>
</feature>
<feature type="sequence conflict" description="In Ref. 13." evidence="13" ref="13">
    <original>L</original>
    <variation>P</variation>
    <location>
        <position position="139"/>
    </location>
</feature>
<feature type="sequence conflict" description="In Ref. 11; AAA51664." evidence="13" ref="11">
    <original>V</original>
    <variation>C</variation>
    <location>
        <position position="172"/>
    </location>
</feature>
<feature type="sequence conflict" description="In Ref. 11; AAA51664." evidence="13" ref="11">
    <original>R</original>
    <variation>L</variation>
    <location>
        <position position="383"/>
    </location>
</feature>
<feature type="strand" evidence="16">
    <location>
        <begin position="45"/>
        <end position="47"/>
    </location>
</feature>
<feature type="helix" evidence="15">
    <location>
        <begin position="49"/>
        <end position="75"/>
    </location>
</feature>
<feature type="strand" evidence="15">
    <location>
        <begin position="76"/>
        <end position="78"/>
    </location>
</feature>
<feature type="helix" evidence="15">
    <location>
        <begin position="82"/>
        <end position="84"/>
    </location>
</feature>
<feature type="helix" evidence="15">
    <location>
        <begin position="85"/>
        <end position="99"/>
    </location>
</feature>
<feature type="helix" evidence="15">
    <location>
        <begin position="102"/>
        <end position="110"/>
    </location>
</feature>
<feature type="strand" evidence="16">
    <location>
        <begin position="111"/>
        <end position="113"/>
    </location>
</feature>
<feature type="helix" evidence="15">
    <location>
        <begin position="118"/>
        <end position="151"/>
    </location>
</feature>
<feature type="helix" evidence="15">
    <location>
        <begin position="153"/>
        <end position="158"/>
    </location>
</feature>
<feature type="helix" evidence="15">
    <location>
        <begin position="162"/>
        <end position="180"/>
    </location>
</feature>
<feature type="turn" evidence="15">
    <location>
        <begin position="209"/>
        <end position="211"/>
    </location>
</feature>
<feature type="helix" evidence="15">
    <location>
        <begin position="212"/>
        <end position="219"/>
    </location>
</feature>
<feature type="helix" evidence="15">
    <location>
        <begin position="221"/>
        <end position="242"/>
    </location>
</feature>
<feature type="helix" evidence="15">
    <location>
        <begin position="255"/>
        <end position="272"/>
    </location>
</feature>
<feature type="helix" evidence="15">
    <location>
        <begin position="278"/>
        <end position="296"/>
    </location>
</feature>
<feature type="turn" evidence="15">
    <location>
        <begin position="308"/>
        <end position="310"/>
    </location>
</feature>
<feature type="helix" evidence="15">
    <location>
        <begin position="326"/>
        <end position="341"/>
    </location>
</feature>
<feature type="helix" evidence="15">
    <location>
        <begin position="344"/>
        <end position="350"/>
    </location>
</feature>
<feature type="turn" evidence="15">
    <location>
        <begin position="351"/>
        <end position="353"/>
    </location>
</feature>
<feature type="helix" evidence="15">
    <location>
        <begin position="355"/>
        <end position="362"/>
    </location>
</feature>
<feature type="helix" evidence="15">
    <location>
        <begin position="367"/>
        <end position="377"/>
    </location>
</feature>
<feature type="helix" evidence="15">
    <location>
        <begin position="383"/>
        <end position="411"/>
    </location>
</feature>
<feature type="helix" evidence="15">
    <location>
        <begin position="412"/>
        <end position="414"/>
    </location>
</feature>
<feature type="helix" evidence="15">
    <location>
        <begin position="420"/>
        <end position="431"/>
    </location>
</feature>
<feature type="helix" evidence="15">
    <location>
        <begin position="433"/>
        <end position="444"/>
    </location>
</feature>
<feature type="helix" evidence="15">
    <location>
        <begin position="446"/>
        <end position="457"/>
    </location>
</feature>
<evidence type="ECO:0000250" key="1"/>
<evidence type="ECO:0000250" key="2">
    <source>
        <dbReference type="UniProtKB" id="P22909"/>
    </source>
</evidence>
<evidence type="ECO:0000250" key="3">
    <source>
        <dbReference type="UniProtKB" id="Q01338"/>
    </source>
</evidence>
<evidence type="ECO:0000255" key="4"/>
<evidence type="ECO:0000255" key="5">
    <source>
        <dbReference type="PROSITE-ProRule" id="PRU00521"/>
    </source>
</evidence>
<evidence type="ECO:0000256" key="6">
    <source>
        <dbReference type="SAM" id="MobiDB-lite"/>
    </source>
</evidence>
<evidence type="ECO:0000269" key="7">
    <source>
    </source>
</evidence>
<evidence type="ECO:0000269" key="8">
    <source>
    </source>
</evidence>
<evidence type="ECO:0000269" key="9">
    <source>
    </source>
</evidence>
<evidence type="ECO:0000269" key="10">
    <source>
    </source>
</evidence>
<evidence type="ECO:0000269" key="11">
    <source>
    </source>
</evidence>
<evidence type="ECO:0000269" key="12">
    <source ref="7"/>
</evidence>
<evidence type="ECO:0000305" key="13"/>
<evidence type="ECO:0000312" key="14">
    <source>
        <dbReference type="HGNC" id="HGNC:281"/>
    </source>
</evidence>
<evidence type="ECO:0007829" key="15">
    <source>
        <dbReference type="PDB" id="6KUX"/>
    </source>
</evidence>
<evidence type="ECO:0007829" key="16">
    <source>
        <dbReference type="PDB" id="7EJ8"/>
    </source>
</evidence>
<accession>P08913</accession>
<accession>B0LPF6</accession>
<accession>Q2I8G2</accession>
<accession>Q2XN99</accession>
<accession>Q86TH8</accession>
<accession>Q9BZK1</accession>
<name>ADA2A_HUMAN</name>
<sequence>MFRQEQPLAEGSFAPMGSLQPDAGNASWNGTEAPGGGARATPYSLQVTLTLVCLAGLLMLLTVFGNVLVIIAVFTSRALKAPQNLFLVSLASADILVATLVIPFSLANEVMGYWYFGKAWCEIYLALDVLFCTSSIVHLCAISLDRYWSITQAIEYNLKRTPRRIKAIIITVWVISAVISFPPLISIEKKGGGGGPQPAEPRCEINDQKWYVISSCIGSFFAPCLIMILVYVRIYQIAKRRTRVPPSRRGPDAVAAPPGGTERRPNGLGPERSAGPGGAEAEPLPTQLNGAPGEPAPAGPRDTDALDLEESSSSDHAERPPGPRRPERGPRGKGKARASQVKPGDSLPRRGPGATGIGTPAAGPGEERVGAAKASRWRGRQNREKRFTFVLAVVIGVFVVCWFPFFFTYTLTAVGCSVPRTLFKFFFWFGYCNSSLNPVIYTIFNHDFRRAFKKILCRGDRKRIV</sequence>
<protein>
    <recommendedName>
        <fullName evidence="13">Alpha-2A adrenergic receptor</fullName>
    </recommendedName>
    <alternativeName>
        <fullName>Alpha-2 adrenergic receptor subtype C10</fullName>
    </alternativeName>
    <alternativeName>
        <fullName>Alpha-2A adrenoreceptor</fullName>
        <shortName>Alpha-2A adrenoceptor</shortName>
        <shortName>Alpha-2AAR</shortName>
    </alternativeName>
</protein>
<proteinExistence type="evidence at protein level"/>
<organism>
    <name type="scientific">Homo sapiens</name>
    <name type="common">Human</name>
    <dbReference type="NCBI Taxonomy" id="9606"/>
    <lineage>
        <taxon>Eukaryota</taxon>
        <taxon>Metazoa</taxon>
        <taxon>Chordata</taxon>
        <taxon>Craniata</taxon>
        <taxon>Vertebrata</taxon>
        <taxon>Euteleostomi</taxon>
        <taxon>Mammalia</taxon>
        <taxon>Eutheria</taxon>
        <taxon>Euarchontoglires</taxon>
        <taxon>Primates</taxon>
        <taxon>Haplorrhini</taxon>
        <taxon>Catarrhini</taxon>
        <taxon>Hominidae</taxon>
        <taxon>Homo</taxon>
    </lineage>
</organism>
<keyword id="KW-0002">3D-structure</keyword>
<keyword id="KW-1003">Cell membrane</keyword>
<keyword id="KW-0903">Direct protein sequencing</keyword>
<keyword id="KW-1015">Disulfide bond</keyword>
<keyword id="KW-0297">G-protein coupled receptor</keyword>
<keyword id="KW-0325">Glycoprotein</keyword>
<keyword id="KW-0449">Lipoprotein</keyword>
<keyword id="KW-0472">Membrane</keyword>
<keyword id="KW-0488">Methylation</keyword>
<keyword id="KW-0564">Palmitate</keyword>
<keyword id="KW-0597">Phosphoprotein</keyword>
<keyword id="KW-1267">Proteomics identification</keyword>
<keyword id="KW-0675">Receptor</keyword>
<keyword id="KW-1185">Reference proteome</keyword>
<keyword id="KW-0807">Transducer</keyword>
<keyword id="KW-0812">Transmembrane</keyword>
<keyword id="KW-1133">Transmembrane helix</keyword>
<gene>
    <name evidence="14" type="primary">ADRA2A</name>
    <name type="synonym">ADRA2R</name>
    <name type="synonym">ADRAR</name>
</gene>
<reference key="1">
    <citation type="journal article" date="1989" name="J. Biol. Chem.">
        <title>Cloning, sequence analysis, and permanent expression of a human alpha 2-adrenergic receptor in Chinese hamster ovary cells. Evidence for independent pathways of receptor coupling to adenylate cyclase attenuation and activation.</title>
        <authorList>
            <person name="Fraser C.M."/>
            <person name="Arakawa S."/>
            <person name="McCombie W.R."/>
            <person name="Venter J.C."/>
        </authorList>
    </citation>
    <scope>NUCLEOTIDE SEQUENCE [GENOMIC DNA]</scope>
</reference>
<reference key="2">
    <citation type="journal article" date="1990" name="J. Biol. Chem.">
        <title>Cloning, sequencing, and expression of the gene encoding the porcine alpha 2-adrenergic receptor. Allosteric modulation by Na+, H+, and amiloride analogs.</title>
        <authorList>
            <person name="Guyer C.A."/>
            <person name="Horstman D.A."/>
            <person name="Wilson A.L."/>
            <person name="Clark J.D."/>
            <person name="Kragoe E.J. Jr."/>
            <person name="Limbird L.E."/>
        </authorList>
    </citation>
    <scope>SEQUENCE REVISION TO 333-365</scope>
</reference>
<reference key="3">
    <citation type="journal article" date="2006" name="Proc. Natl. Acad. Sci. U.S.A.">
        <title>Complex haplotypes derived from noncoding polymorphisms of the intronless alpha-2A-adrenergic gene diversify receptor expression.</title>
        <authorList>
            <person name="Small K.M."/>
            <person name="Brown K.M."/>
            <person name="Seman C.A."/>
            <person name="Theiss C.T."/>
            <person name="Liggett S.B."/>
        </authorList>
    </citation>
    <scope>NUCLEOTIDE SEQUENCE [GENOMIC DNA]</scope>
</reference>
<reference key="4">
    <citation type="submission" date="2000-07" db="EMBL/GenBank/DDBJ databases">
        <title>Cloning and expression of human alpha-2A adrenergic receptor in SY5Y cells.</title>
        <authorList>
            <person name="Mao Z.-M."/>
            <person name="Tang K."/>
            <person name="Li B.-M."/>
            <person name="Jing N.-H."/>
        </authorList>
    </citation>
    <scope>NUCLEOTIDE SEQUENCE [MRNA]</scope>
</reference>
<reference key="5">
    <citation type="submission" date="2000-08" db="EMBL/GenBank/DDBJ databases">
        <title>A search for genetic variability in the human alpha-2 adrenergic receptor on chromosome 10.</title>
        <authorList>
            <person name="Castellano M."/>
            <person name="Giacche' M."/>
            <person name="Rossi F."/>
            <person name="Rivadossi F."/>
            <person name="Perani C."/>
            <person name="Beschi M."/>
            <person name="Agabiti Rosei E."/>
        </authorList>
    </citation>
    <scope>NUCLEOTIDE SEQUENCE [GENOMIC DNA]</scope>
</reference>
<reference key="6">
    <citation type="submission" date="2001-04" db="EMBL/GenBank/DDBJ databases">
        <title>Human alpha-2A adrenergic receptor gene and the genotype of -1296 nucleotide and motionsickness.</title>
        <authorList>
            <person name="Liu L."/>
            <person name="Yuan L."/>
        </authorList>
    </citation>
    <scope>NUCLEOTIDE SEQUENCE [GENOMIC DNA]</scope>
</reference>
<reference key="7">
    <citation type="submission" date="2005-11" db="EMBL/GenBank/DDBJ databases">
        <authorList>
            <consortium name="SeattleSNPs variation discovery resource"/>
        </authorList>
    </citation>
    <scope>NUCLEOTIDE SEQUENCE [GENOMIC DNA]</scope>
    <scope>VARIANT LYS-266</scope>
</reference>
<reference key="8">
    <citation type="submission" date="2007-12" db="EMBL/GenBank/DDBJ databases">
        <authorList>
            <consortium name="NHLBI resequencing and genotyping service (RS&amp;G)"/>
        </authorList>
    </citation>
    <scope>NUCLEOTIDE SEQUENCE [GENOMIC DNA]</scope>
</reference>
<reference key="9">
    <citation type="journal article" date="2004" name="Nature">
        <title>The DNA sequence and comparative analysis of human chromosome 10.</title>
        <authorList>
            <person name="Deloukas P."/>
            <person name="Earthrowl M.E."/>
            <person name="Grafham D.V."/>
            <person name="Rubenfield M."/>
            <person name="French L."/>
            <person name="Steward C.A."/>
            <person name="Sims S.K."/>
            <person name="Jones M.C."/>
            <person name="Searle S."/>
            <person name="Scott C."/>
            <person name="Howe K."/>
            <person name="Hunt S.E."/>
            <person name="Andrews T.D."/>
            <person name="Gilbert J.G.R."/>
            <person name="Swarbreck D."/>
            <person name="Ashurst J.L."/>
            <person name="Taylor A."/>
            <person name="Battles J."/>
            <person name="Bird C.P."/>
            <person name="Ainscough R."/>
            <person name="Almeida J.P."/>
            <person name="Ashwell R.I.S."/>
            <person name="Ambrose K.D."/>
            <person name="Babbage A.K."/>
            <person name="Bagguley C.L."/>
            <person name="Bailey J."/>
            <person name="Banerjee R."/>
            <person name="Bates K."/>
            <person name="Beasley H."/>
            <person name="Bray-Allen S."/>
            <person name="Brown A.J."/>
            <person name="Brown J.Y."/>
            <person name="Burford D.C."/>
            <person name="Burrill W."/>
            <person name="Burton J."/>
            <person name="Cahill P."/>
            <person name="Camire D."/>
            <person name="Carter N.P."/>
            <person name="Chapman J.C."/>
            <person name="Clark S.Y."/>
            <person name="Clarke G."/>
            <person name="Clee C.M."/>
            <person name="Clegg S."/>
            <person name="Corby N."/>
            <person name="Coulson A."/>
            <person name="Dhami P."/>
            <person name="Dutta I."/>
            <person name="Dunn M."/>
            <person name="Faulkner L."/>
            <person name="Frankish A."/>
            <person name="Frankland J.A."/>
            <person name="Garner P."/>
            <person name="Garnett J."/>
            <person name="Gribble S."/>
            <person name="Griffiths C."/>
            <person name="Grocock R."/>
            <person name="Gustafson E."/>
            <person name="Hammond S."/>
            <person name="Harley J.L."/>
            <person name="Hart E."/>
            <person name="Heath P.D."/>
            <person name="Ho T.P."/>
            <person name="Hopkins B."/>
            <person name="Horne J."/>
            <person name="Howden P.J."/>
            <person name="Huckle E."/>
            <person name="Hynds C."/>
            <person name="Johnson C."/>
            <person name="Johnson D."/>
            <person name="Kana A."/>
            <person name="Kay M."/>
            <person name="Kimberley A.M."/>
            <person name="Kershaw J.K."/>
            <person name="Kokkinaki M."/>
            <person name="Laird G.K."/>
            <person name="Lawlor S."/>
            <person name="Lee H.M."/>
            <person name="Leongamornlert D.A."/>
            <person name="Laird G."/>
            <person name="Lloyd C."/>
            <person name="Lloyd D.M."/>
            <person name="Loveland J."/>
            <person name="Lovell J."/>
            <person name="McLaren S."/>
            <person name="McLay K.E."/>
            <person name="McMurray A."/>
            <person name="Mashreghi-Mohammadi M."/>
            <person name="Matthews L."/>
            <person name="Milne S."/>
            <person name="Nickerson T."/>
            <person name="Nguyen M."/>
            <person name="Overton-Larty E."/>
            <person name="Palmer S.A."/>
            <person name="Pearce A.V."/>
            <person name="Peck A.I."/>
            <person name="Pelan S."/>
            <person name="Phillimore B."/>
            <person name="Porter K."/>
            <person name="Rice C.M."/>
            <person name="Rogosin A."/>
            <person name="Ross M.T."/>
            <person name="Sarafidou T."/>
            <person name="Sehra H.K."/>
            <person name="Shownkeen R."/>
            <person name="Skuce C.D."/>
            <person name="Smith M."/>
            <person name="Standring L."/>
            <person name="Sycamore N."/>
            <person name="Tester J."/>
            <person name="Thorpe A."/>
            <person name="Torcasso W."/>
            <person name="Tracey A."/>
            <person name="Tromans A."/>
            <person name="Tsolas J."/>
            <person name="Wall M."/>
            <person name="Walsh J."/>
            <person name="Wang H."/>
            <person name="Weinstock K."/>
            <person name="West A.P."/>
            <person name="Willey D.L."/>
            <person name="Whitehead S.L."/>
            <person name="Wilming L."/>
            <person name="Wray P.W."/>
            <person name="Young L."/>
            <person name="Chen Y."/>
            <person name="Lovering R.C."/>
            <person name="Moschonas N.K."/>
            <person name="Siebert R."/>
            <person name="Fechtel K."/>
            <person name="Bentley D."/>
            <person name="Durbin R.M."/>
            <person name="Hubbard T."/>
            <person name="Doucette-Stamm L."/>
            <person name="Beck S."/>
            <person name="Smith D.R."/>
            <person name="Rogers J."/>
        </authorList>
    </citation>
    <scope>NUCLEOTIDE SEQUENCE [LARGE SCALE GENOMIC DNA]</scope>
</reference>
<reference key="10">
    <citation type="journal article" date="2004" name="Genome Res.">
        <title>The status, quality, and expansion of the NIH full-length cDNA project: the Mammalian Gene Collection (MGC).</title>
        <authorList>
            <consortium name="The MGC Project Team"/>
        </authorList>
    </citation>
    <scope>NUCLEOTIDE SEQUENCE [LARGE SCALE MRNA]</scope>
    <source>
        <tissue>PNS</tissue>
        <tissue>Testis</tissue>
    </source>
</reference>
<reference key="11">
    <citation type="journal article" date="1987" name="Science">
        <title>Cloning, sequencing, and expression of the gene coding for the human platelet alpha 2-adrenergic receptor.</title>
        <authorList>
            <person name="Kobilka B.K."/>
            <person name="Matsui H."/>
            <person name="Kobilka T.S."/>
            <person name="Yang-Feng T.L."/>
            <person name="Francke U."/>
            <person name="Caron M.G."/>
            <person name="Lefkowitz R.J."/>
            <person name="Regan J.W."/>
        </authorList>
    </citation>
    <scope>NUCLEOTIDE SEQUENCE [GENOMIC DNA] OF 7-465</scope>
    <scope>PARTIAL PROTEIN SEQUENCE</scope>
    <source>
        <tissue>Platelet</tissue>
    </source>
</reference>
<reference key="12">
    <citation type="journal article" date="2000" name="J. Biol. Chem.">
        <title>An Asn to Lys polymorphism in the third intracellular loop of the human alpha 2A-adrenergic receptor imparts enhanced agonist-promoted Gi coupling.</title>
        <authorList>
            <person name="Small K.M."/>
            <person name="Forbes S.L."/>
            <person name="Brown K.M."/>
            <person name="Liggett S.B."/>
        </authorList>
    </citation>
    <scope>NUCLEOTIDE SEQUENCE [GENOMIC DNA] OF 16-465</scope>
    <scope>VARIANT LYS-266</scope>
</reference>
<reference key="13">
    <citation type="journal article" date="1991" name="FEBS Lett.">
        <title>Identification of an additional gene belonging to the alpha 2 adrenergic receptor family in the human genome by PCR.</title>
        <authorList>
            <person name="Chhajlani V."/>
            <person name="Rangel N."/>
            <person name="Uhlen S."/>
            <person name="Wikberg J.E.S."/>
        </authorList>
    </citation>
    <scope>NUCLEOTIDE SEQUENCE [GENOMIC DNA] OF 92-224</scope>
</reference>
<reference key="14">
    <citation type="journal article" date="1991" name="J. Biol. Chem.">
        <title>A point mutation in the seventh hydrophobic domain of the alpha 2 adrenergic receptor increases its affinity for a family of beta receptor antagonists.</title>
        <authorList>
            <person name="Suryanarayana S."/>
            <person name="Daunt D.A."/>
            <person name="von Zastrow M."/>
            <person name="Kobilka B.K."/>
        </authorList>
    </citation>
    <scope>MUTAGENESIS OF PHE-427</scope>
</reference>
<reference key="15">
    <citation type="journal article" date="1991" name="Mol. Pharmacol.">
        <title>Site-directed mutagenesis of alpha 2a-adrenergic receptors: Identification of amino acids involved in ligand binding and receptor activation by agonists.</title>
        <authorList>
            <person name="Wang C.-D."/>
            <person name="Buck M.A."/>
            <person name="Fraser C.M."/>
        </authorList>
    </citation>
    <scope>MUTAGENESIS OF ASPARTIC ACID AND SERINE RESIDUES</scope>
</reference>
<reference key="16">
    <citation type="journal article" date="2012" name="J. Biol. Chem.">
        <title>Rab26 modulates the cell surface transport of alpha2-adrenergic receptors from the Golgi.</title>
        <authorList>
            <person name="Li C."/>
            <person name="Fan Y."/>
            <person name="Lan T.H."/>
            <person name="Lambert N.A."/>
            <person name="Wu G."/>
        </authorList>
    </citation>
    <scope>FUNCTION</scope>
    <scope>SUBCELLULAR LOCATION</scope>
</reference>
<reference key="17">
    <citation type="journal article" date="2002" name="Biochemistry">
        <title>NMR structure of the second intracellular loop of the alpha 2A adrenergic receptor: evidence for a novel cytoplasmic helix.</title>
        <authorList>
            <person name="Chung D.A."/>
            <person name="Zuiderweg E.R.P."/>
            <person name="Fowler C.B."/>
            <person name="Soyer O.S."/>
            <person name="Mosberg H.I."/>
            <person name="Neubig R.R."/>
        </authorList>
    </citation>
    <scope>STRUCTURE BY NMR OF 133-164</scope>
    <scope>PROBABLE MEMBRANE TOPOLOGY</scope>
</reference>
<reference key="18">
    <citation type="journal article" date="2016" name="JCI Insight">
        <title>Whole-exome sequencing identifies ADRA2A mutation in atypical familial partial lipodystrophy.</title>
        <authorList>
            <person name="Garg A."/>
            <person name="Sankella S."/>
            <person name="Xing C."/>
            <person name="Agarwal A.K."/>
        </authorList>
    </citation>
    <scope>VARIANT FPLD8 PHE-68</scope>
    <scope>CHARACTERIZATION OF VARIANT FPLD8 PHE-68</scope>
    <scope>INVOLVEMENT IN FPLD8</scope>
</reference>